<accession>A8T6A6</accession>
<name>PCSK9_LAGLA</name>
<proteinExistence type="evidence at transcript level"/>
<protein>
    <recommendedName>
        <fullName>Proprotein convertase subtilisin/kexin type 9</fullName>
        <ecNumber>3.4.21.-</ecNumber>
    </recommendedName>
    <alternativeName>
        <fullName>Proprotein convertase 9</fullName>
        <shortName>PC9</shortName>
    </alternativeName>
    <alternativeName>
        <fullName>Subtilisin/kexin-like protease PC9</fullName>
    </alternativeName>
</protein>
<comment type="function">
    <text evidence="1">Crucial player in the regulation of plasma cholesterol homeostasis. Binds to low-density lipid receptor family members: low density lipoprotein receptor (LDLR), very low density lipoprotein receptor (VLDLR), apolipoprotein E receptor (LRP1/APOER) and apolipoprotein receptor 2 (LRP8/APOER2), and promotes their degradation in intracellular acidic compartments. Acts via a non-proteolytic mechanism to enhance the degradation of the hepatic LDLR through a clathrin LDLRAP1/ARH-mediated pathway. May prevent the recycling of LDLR from endosomes to the cell surface or direct it to lysosomes for degradation. Can induce ubiquitination of LDLR leading to its subsequent degradation. Inhibits intracellular degradation of APOB via the autophagosome/lysosome pathway in a LDLR-independent manner. Involved in the disposal of non-acetylated intermediates of BACE1 in the early secretory pathway. Inhibits epithelial Na(+) channel (ENaC)-mediated Na(+) absorption by reducing ENaC surface expression primarily by increasing its proteasomal degradation. Regulates neuronal apoptosis via modulation of LRP8/APOER2 levels and related anti-apoptotic signaling pathways (By similarity).</text>
</comment>
<comment type="cofactor">
    <cofactor evidence="1">
        <name>Ca(2+)</name>
        <dbReference type="ChEBI" id="CHEBI:29108"/>
    </cofactor>
</comment>
<comment type="activity regulation">
    <text evidence="1">Its proteolytic activity is autoinhibited by the non-covalent binding of the propeptide to the catalytic domain. Inhibited by EGTA (By similarity).</text>
</comment>
<comment type="subunit">
    <text evidence="2">Monomer. Can self-associate to form dimers and higher multimers which may have increased LDLR degrading activity. The precursor protein but not the mature protein may form multimers. Interacts with APOB, VLDLR, LRP8/APOER2 and BACE1. The full-length immature form (pro-PCSK9) interacts with SCNN1A, SCNN1B and SCNN1G. The pro-PCSK9 form (via C-terminal domain) interacts with LDLR. Interacts (via the C-terminal domain) with ANXA2 (via repeat Annexin 1); the interaction inhibits the degradation of LDLR.</text>
</comment>
<comment type="subcellular location">
    <subcellularLocation>
        <location evidence="1">Cytoplasm</location>
    </subcellularLocation>
    <subcellularLocation>
        <location evidence="1">Secreted</location>
    </subcellularLocation>
    <subcellularLocation>
        <location evidence="1">Endosome</location>
    </subcellularLocation>
    <subcellularLocation>
        <location evidence="1">Lysosome</location>
    </subcellularLocation>
    <subcellularLocation>
        <location evidence="1">Cell surface</location>
    </subcellularLocation>
    <subcellularLocation>
        <location evidence="1">Endoplasmic reticulum</location>
    </subcellularLocation>
    <subcellularLocation>
        <location evidence="1">Golgi apparatus</location>
    </subcellularLocation>
    <text evidence="1">Autocatalytic cleavage is required to transport it from the endoplasmic reticulum to the Golgi apparatus and for the secretion of the mature protein. Localizes to the endoplasmic reticulum in the absence of LDLR and colocalizes to the cell surface and to the endosomes/lysosomes in the presence of LDLR. The sorting to the cell surface and endosomes is required in order to fully promote LDLR degradation (By similarity).</text>
</comment>
<comment type="domain">
    <text evidence="1">The C-terminal domain (CRD) is essential for the LDLR-binding and degrading activities.</text>
</comment>
<comment type="domain">
    <text evidence="1">The catalytic domain is responsible for mediating its self-association.</text>
</comment>
<comment type="PTM">
    <text evidence="1">Cleavage by furin and PCSK5 generates a truncated inactive protein that is unable to induce LDLR degradation.</text>
</comment>
<comment type="PTM">
    <text evidence="1">Undergoes autocatalytic cleavage in the endoplasmic reticulum to release the propeptide from the N-terminus and the cleavage of the propeptide is strictly required for its maturation and activation. The cleaved propeptide however remains associated with the catalytic domain through non-covalent interactions, preventing potential substrates from accessing its active site. As a result, it is secreted from cells as a propeptide-containing, enzymatically inactive protein (By similarity).</text>
</comment>
<comment type="PTM">
    <text evidence="1">Phosphorylation protects the propeptide against proteolysis.</text>
</comment>
<comment type="similarity">
    <text evidence="5">Belongs to the peptidase S8 family.</text>
</comment>
<dbReference type="EC" id="3.4.21.-"/>
<dbReference type="EMBL" id="EF692509">
    <property type="protein sequence ID" value="ABV59229.1"/>
    <property type="molecule type" value="mRNA"/>
</dbReference>
<dbReference type="SMR" id="A8T6A6"/>
<dbReference type="GlyCosmos" id="A8T6A6">
    <property type="glycosylation" value="1 site, No reported glycans"/>
</dbReference>
<dbReference type="GO" id="GO:0009986">
    <property type="term" value="C:cell surface"/>
    <property type="evidence" value="ECO:0000250"/>
    <property type="project" value="UniProtKB"/>
</dbReference>
<dbReference type="GO" id="GO:0005737">
    <property type="term" value="C:cytoplasm"/>
    <property type="evidence" value="ECO:0000250"/>
    <property type="project" value="UniProtKB"/>
</dbReference>
<dbReference type="GO" id="GO:0005769">
    <property type="term" value="C:early endosome"/>
    <property type="evidence" value="ECO:0000250"/>
    <property type="project" value="UniProtKB"/>
</dbReference>
<dbReference type="GO" id="GO:0005783">
    <property type="term" value="C:endoplasmic reticulum"/>
    <property type="evidence" value="ECO:0000250"/>
    <property type="project" value="UniProtKB"/>
</dbReference>
<dbReference type="GO" id="GO:0005615">
    <property type="term" value="C:extracellular space"/>
    <property type="evidence" value="ECO:0007669"/>
    <property type="project" value="TreeGrafter"/>
</dbReference>
<dbReference type="GO" id="GO:0005794">
    <property type="term" value="C:Golgi apparatus"/>
    <property type="evidence" value="ECO:0000250"/>
    <property type="project" value="UniProtKB"/>
</dbReference>
<dbReference type="GO" id="GO:0005770">
    <property type="term" value="C:late endosome"/>
    <property type="evidence" value="ECO:0000250"/>
    <property type="project" value="UniProtKB"/>
</dbReference>
<dbReference type="GO" id="GO:0005764">
    <property type="term" value="C:lysosome"/>
    <property type="evidence" value="ECO:0000250"/>
    <property type="project" value="UniProtKB"/>
</dbReference>
<dbReference type="GO" id="GO:0034185">
    <property type="term" value="F:apolipoprotein binding"/>
    <property type="evidence" value="ECO:0000250"/>
    <property type="project" value="UniProtKB"/>
</dbReference>
<dbReference type="GO" id="GO:0030169">
    <property type="term" value="F:low-density lipoprotein particle binding"/>
    <property type="evidence" value="ECO:0000250"/>
    <property type="project" value="UniProtKB"/>
</dbReference>
<dbReference type="GO" id="GO:0004252">
    <property type="term" value="F:serine-type endopeptidase activity"/>
    <property type="evidence" value="ECO:0007669"/>
    <property type="project" value="InterPro"/>
</dbReference>
<dbReference type="GO" id="GO:0034189">
    <property type="term" value="F:very-low-density lipoprotein particle binding"/>
    <property type="evidence" value="ECO:0000250"/>
    <property type="project" value="UniProtKB"/>
</dbReference>
<dbReference type="GO" id="GO:0006915">
    <property type="term" value="P:apoptotic process"/>
    <property type="evidence" value="ECO:0007669"/>
    <property type="project" value="UniProtKB-KW"/>
</dbReference>
<dbReference type="GO" id="GO:0008203">
    <property type="term" value="P:cholesterol metabolic process"/>
    <property type="evidence" value="ECO:0007669"/>
    <property type="project" value="UniProtKB-KW"/>
</dbReference>
<dbReference type="GO" id="GO:0032802">
    <property type="term" value="P:low-density lipoprotein particle receptor catabolic process"/>
    <property type="evidence" value="ECO:0000250"/>
    <property type="project" value="UniProtKB"/>
</dbReference>
<dbReference type="GO" id="GO:0006508">
    <property type="term" value="P:proteolysis"/>
    <property type="evidence" value="ECO:0007669"/>
    <property type="project" value="UniProtKB-KW"/>
</dbReference>
<dbReference type="GO" id="GO:0043523">
    <property type="term" value="P:regulation of neuron apoptotic process"/>
    <property type="evidence" value="ECO:0000250"/>
    <property type="project" value="UniProtKB"/>
</dbReference>
<dbReference type="CDD" id="cd16839">
    <property type="entry name" value="PCSK9_C-CRD"/>
    <property type="match status" value="1"/>
</dbReference>
<dbReference type="CDD" id="cd04077">
    <property type="entry name" value="Peptidases_S8_PCSK9_ProteinaseK_like"/>
    <property type="match status" value="1"/>
</dbReference>
<dbReference type="FunFam" id="2.60.120.690:FF:000001">
    <property type="entry name" value="Proprotein convertase subtilisin/kexin type 9"/>
    <property type="match status" value="1"/>
</dbReference>
<dbReference type="FunFam" id="3.30.70.80:FF:000004">
    <property type="entry name" value="Proprotein convertase subtilisin/kexin type 9"/>
    <property type="match status" value="1"/>
</dbReference>
<dbReference type="FunFam" id="3.40.50.200:FF:000016">
    <property type="entry name" value="Proprotein convertase subtilisin/kexin type 9"/>
    <property type="match status" value="1"/>
</dbReference>
<dbReference type="Gene3D" id="3.30.70.80">
    <property type="entry name" value="Peptidase S8 propeptide/proteinase inhibitor I9"/>
    <property type="match status" value="1"/>
</dbReference>
<dbReference type="Gene3D" id="3.40.50.200">
    <property type="entry name" value="Peptidase S8/S53 domain"/>
    <property type="match status" value="1"/>
</dbReference>
<dbReference type="Gene3D" id="2.60.120.690">
    <property type="entry name" value="Proprotein convertase subtilisin/kexin type 9"/>
    <property type="match status" value="1"/>
</dbReference>
<dbReference type="InterPro" id="IPR041254">
    <property type="entry name" value="PCSK9_C1"/>
</dbReference>
<dbReference type="InterPro" id="IPR041052">
    <property type="entry name" value="PCSK9_C2"/>
</dbReference>
<dbReference type="InterPro" id="IPR041051">
    <property type="entry name" value="PCSK9_C3"/>
</dbReference>
<dbReference type="InterPro" id="IPR034193">
    <property type="entry name" value="PCSK9_ProteinaseK-like"/>
</dbReference>
<dbReference type="InterPro" id="IPR000209">
    <property type="entry name" value="Peptidase_S8/S53_dom"/>
</dbReference>
<dbReference type="InterPro" id="IPR036852">
    <property type="entry name" value="Peptidase_S8/S53_dom_sf"/>
</dbReference>
<dbReference type="InterPro" id="IPR050131">
    <property type="entry name" value="Peptidase_S8_subtilisin-like"/>
</dbReference>
<dbReference type="InterPro" id="IPR015500">
    <property type="entry name" value="Peptidase_S8_subtilisin-rel"/>
</dbReference>
<dbReference type="InterPro" id="IPR010259">
    <property type="entry name" value="S8pro/Inhibitor_I9"/>
</dbReference>
<dbReference type="InterPro" id="IPR037045">
    <property type="entry name" value="S8pro/Inhibitor_I9_sf"/>
</dbReference>
<dbReference type="PANTHER" id="PTHR43806">
    <property type="entry name" value="PEPTIDASE S8"/>
    <property type="match status" value="1"/>
</dbReference>
<dbReference type="PANTHER" id="PTHR43806:SF60">
    <property type="entry name" value="PROPROTEIN CONVERTASE SUBTILISIN_KEXIN TYPE 9"/>
    <property type="match status" value="1"/>
</dbReference>
<dbReference type="Pfam" id="PF05922">
    <property type="entry name" value="Inhibitor_I9"/>
    <property type="match status" value="1"/>
</dbReference>
<dbReference type="Pfam" id="PF18459">
    <property type="entry name" value="PCSK9_C1"/>
    <property type="match status" value="1"/>
</dbReference>
<dbReference type="Pfam" id="PF18464">
    <property type="entry name" value="PCSK9_C2"/>
    <property type="match status" value="1"/>
</dbReference>
<dbReference type="Pfam" id="PF18463">
    <property type="entry name" value="PCSK9_C3"/>
    <property type="match status" value="1"/>
</dbReference>
<dbReference type="Pfam" id="PF00082">
    <property type="entry name" value="Peptidase_S8"/>
    <property type="match status" value="1"/>
</dbReference>
<dbReference type="PRINTS" id="PR00723">
    <property type="entry name" value="SUBTILISIN"/>
</dbReference>
<dbReference type="SUPFAM" id="SSF54897">
    <property type="entry name" value="Protease propeptides/inhibitors"/>
    <property type="match status" value="1"/>
</dbReference>
<dbReference type="SUPFAM" id="SSF52743">
    <property type="entry name" value="Subtilisin-like"/>
    <property type="match status" value="1"/>
</dbReference>
<dbReference type="PROSITE" id="PS51892">
    <property type="entry name" value="SUBTILASE"/>
    <property type="match status" value="1"/>
</dbReference>
<keyword id="KW-0053">Apoptosis</keyword>
<keyword id="KW-0068">Autocatalytic cleavage</keyword>
<keyword id="KW-0106">Calcium</keyword>
<keyword id="KW-0153">Cholesterol metabolism</keyword>
<keyword id="KW-0963">Cytoplasm</keyword>
<keyword id="KW-1015">Disulfide bond</keyword>
<keyword id="KW-0256">Endoplasmic reticulum</keyword>
<keyword id="KW-0967">Endosome</keyword>
<keyword id="KW-0325">Glycoprotein</keyword>
<keyword id="KW-0333">Golgi apparatus</keyword>
<keyword id="KW-0378">Hydrolase</keyword>
<keyword id="KW-0443">Lipid metabolism</keyword>
<keyword id="KW-0458">Lysosome</keyword>
<keyword id="KW-0597">Phosphoprotein</keyword>
<keyword id="KW-0645">Protease</keyword>
<keyword id="KW-0964">Secreted</keyword>
<keyword id="KW-0720">Serine protease</keyword>
<keyword id="KW-0732">Signal</keyword>
<keyword id="KW-0753">Steroid metabolism</keyword>
<keyword id="KW-1207">Sterol metabolism</keyword>
<keyword id="KW-0765">Sulfation</keyword>
<keyword id="KW-0865">Zymogen</keyword>
<feature type="signal peptide" evidence="1">
    <location>
        <begin position="1"/>
        <end position="28"/>
    </location>
</feature>
<feature type="propeptide" id="PRO_0000318282" evidence="1">
    <location>
        <begin position="29"/>
        <end position="150"/>
    </location>
</feature>
<feature type="chain" id="PRO_0000318283" description="Proprotein convertase subtilisin/kexin type 9">
    <location>
        <begin position="151"/>
        <end position="690"/>
    </location>
</feature>
<feature type="domain" description="Inhibitor I9" evidence="3">
    <location>
        <begin position="75"/>
        <end position="147"/>
    </location>
</feature>
<feature type="domain" description="Peptidase S8" evidence="4">
    <location>
        <begin position="153"/>
        <end position="459"/>
    </location>
</feature>
<feature type="region of interest" description="C-terminal domain" evidence="1">
    <location>
        <begin position="448"/>
        <end position="690"/>
    </location>
</feature>
<feature type="active site" description="Charge relay system" evidence="4">
    <location>
        <position position="184"/>
    </location>
</feature>
<feature type="active site" description="Charge relay system" evidence="4">
    <location>
        <position position="224"/>
    </location>
</feature>
<feature type="active site" description="Charge relay system" evidence="4">
    <location>
        <position position="384"/>
    </location>
</feature>
<feature type="site" description="Cleavage; by autolysis" evidence="1">
    <location>
        <begin position="150"/>
        <end position="151"/>
    </location>
</feature>
<feature type="site" description="Cleavage; by furin and PCSK5" evidence="1">
    <location>
        <begin position="216"/>
        <end position="217"/>
    </location>
</feature>
<feature type="modified residue" description="Sulfotyrosine" evidence="1">
    <location>
        <position position="36"/>
    </location>
</feature>
<feature type="modified residue" description="Phosphoserine" evidence="2">
    <location>
        <position position="45"/>
    </location>
</feature>
<feature type="modified residue" description="Phosphoserine" evidence="2">
    <location>
        <position position="686"/>
    </location>
</feature>
<feature type="glycosylation site" description="N-linked (GlcNAc...) asparagine" evidence="3">
    <location>
        <position position="531"/>
    </location>
</feature>
<feature type="disulfide bond" evidence="3">
    <location>
        <begin position="221"/>
        <end position="253"/>
    </location>
</feature>
<feature type="disulfide bond" evidence="3">
    <location>
        <begin position="321"/>
        <end position="356"/>
    </location>
</feature>
<feature type="disulfide bond" evidence="3">
    <location>
        <begin position="455"/>
        <end position="525"/>
    </location>
</feature>
<feature type="disulfide bond" evidence="3">
    <location>
        <begin position="475"/>
        <end position="524"/>
    </location>
</feature>
<feature type="disulfide bond" evidence="3">
    <location>
        <begin position="484"/>
        <end position="507"/>
    </location>
</feature>
<feature type="disulfide bond" evidence="3">
    <location>
        <begin position="532"/>
        <end position="599"/>
    </location>
</feature>
<feature type="disulfide bond" evidence="3">
    <location>
        <begin position="550"/>
        <end position="598"/>
    </location>
</feature>
<feature type="disulfide bond" evidence="3">
    <location>
        <begin position="560"/>
        <end position="586"/>
    </location>
</feature>
<feature type="disulfide bond" evidence="3">
    <location>
        <begin position="606"/>
        <end position="677"/>
    </location>
</feature>
<feature type="disulfide bond" evidence="3">
    <location>
        <begin position="624"/>
        <end position="676"/>
    </location>
</feature>
<feature type="disulfide bond" evidence="3">
    <location>
        <begin position="633"/>
        <end position="652"/>
    </location>
</feature>
<reference key="1">
    <citation type="journal article" date="2007" name="PLoS ONE">
        <title>Evidence for positive selection in the C-terminal domain of the cholesterol metabolism gene PCSK9 based on phylogenetic analysis in 14 primate species.</title>
        <authorList>
            <person name="Ding K."/>
            <person name="McDonough S.J."/>
            <person name="Kullo I.J."/>
        </authorList>
    </citation>
    <scope>NUCLEOTIDE SEQUENCE [MRNA]</scope>
</reference>
<gene>
    <name type="primary">PCSK9</name>
</gene>
<organism>
    <name type="scientific">Lagothrix lagotricha</name>
    <name type="common">Brown woolly monkey</name>
    <name type="synonym">Humboldt's woolly monkey</name>
    <dbReference type="NCBI Taxonomy" id="9519"/>
    <lineage>
        <taxon>Eukaryota</taxon>
        <taxon>Metazoa</taxon>
        <taxon>Chordata</taxon>
        <taxon>Craniata</taxon>
        <taxon>Vertebrata</taxon>
        <taxon>Euteleostomi</taxon>
        <taxon>Mammalia</taxon>
        <taxon>Eutheria</taxon>
        <taxon>Euarchontoglires</taxon>
        <taxon>Primates</taxon>
        <taxon>Haplorrhini</taxon>
        <taxon>Platyrrhini</taxon>
        <taxon>Atelidae</taxon>
        <taxon>Atelinae</taxon>
        <taxon>Lagothrix</taxon>
    </lineage>
</organism>
<sequence>MGTVRSRRLWWPLPLLLLLLLGPAGARAQEDDDGDYEELVLALRSEEDGLAEALQHGATATFHRCAKDPWRLPGTYVVVLKEETQRLQPERTARRLQAQAARRGYLIKLLHVFHDLLPGFLVKMSRDLLELALRLPHVDYIEEDSYVFAQSIPWNLERITPARYRADEYQPPNGGSLVEVYLLDTSIQSGHREIEGRVMVTDFESVPEEDGTRFHRQASKCDSHGTHLAGVVSGRDAGVAKGASLRSLRVLNCQGKGTVSSTLIGLEFIRKNQLVQPVGPLVVLLPLAGGYSRVLNAACQRLARAGVVLVAAAGNFRDDACLYSPASAPEVITVGATNAQDQPVTLGTLGTNFGRCVDLFAPGEDIIGASSDCSTCFVSQSGTSQAAAHVAGIAAMMLSAEPELTLAELRQRLIHFSAKDVINEAWFPEDQRVLTPNLVAALPPSTHGAGWQLFCRTVWSAHSGPTRMATAMARCAPDEELLSCSSFSRSGKRRGERIEAQGGKLVCRAHNAFGGEGVYAIARCCLLPQANCSVHTAPPAGTGMGTRVHCHQQGHVLTGCSSHWEVEDLGTHKPPVLRPRVQPDQCMGHSGASTHASCCHAPGLECKVKEHGLPAPQEQVTVACEEGWTLTGCSALPGTSHVLGAYAVDDTCVVRSRDVGTTGNISEEAVTAVAICCRSWHLAQASQELQ</sequence>
<evidence type="ECO:0000250" key="1"/>
<evidence type="ECO:0000250" key="2">
    <source>
        <dbReference type="UniProtKB" id="Q8NBP7"/>
    </source>
</evidence>
<evidence type="ECO:0000255" key="3"/>
<evidence type="ECO:0000255" key="4">
    <source>
        <dbReference type="PROSITE-ProRule" id="PRU01240"/>
    </source>
</evidence>
<evidence type="ECO:0000305" key="5"/>